<reference key="1">
    <citation type="journal article" date="1997" name="Infect. Immun.">
        <title>Expression, cloning, and characterization of a Candida albicans gene, ALA1, that confers adherence properties upon Saccharomyces cerevisiae for extracellular matrix proteins.</title>
        <authorList>
            <person name="Gaur N.K."/>
            <person name="Klotz S.A."/>
        </authorList>
    </citation>
    <scope>NUCLEOTIDE SEQUENCE [GENOMIC DNA]</scope>
    <scope>FUNCTION</scope>
</reference>
<dbReference type="EMBL" id="AF025429">
    <property type="protein sequence ID" value="AAB88883.1"/>
    <property type="molecule type" value="Genomic_DNA"/>
</dbReference>
<dbReference type="PIR" id="T30531">
    <property type="entry name" value="T30531"/>
</dbReference>
<dbReference type="PDB" id="6RHA">
    <property type="method" value="X-ray"/>
    <property type="resolution" value="1.60 A"/>
    <property type="chains" value="A/B=156-161"/>
</dbReference>
<dbReference type="PDB" id="6RHB">
    <property type="method" value="X-ray"/>
    <property type="resolution" value="1.26 A"/>
    <property type="chains" value="B=196-201"/>
</dbReference>
<dbReference type="PDB" id="6RHD">
    <property type="method" value="X-ray"/>
    <property type="resolution" value="1.20 A"/>
    <property type="chains" value="B=369-374"/>
</dbReference>
<dbReference type="PDBsum" id="6RHA"/>
<dbReference type="PDBsum" id="6RHB"/>
<dbReference type="PDBsum" id="6RHD"/>
<dbReference type="SMR" id="O13368"/>
<dbReference type="GlyCosmos" id="O13368">
    <property type="glycosylation" value="4 sites, No reported glycans"/>
</dbReference>
<dbReference type="VEuPathDB" id="FungiDB:C6_03690W_A"/>
<dbReference type="VEuPathDB" id="FungiDB:CAWG_02930"/>
<dbReference type="VEuPathDB" id="FungiDB:CAWG_04941"/>
<dbReference type="GO" id="GO:0009986">
    <property type="term" value="C:cell surface"/>
    <property type="evidence" value="ECO:0007669"/>
    <property type="project" value="TreeGrafter"/>
</dbReference>
<dbReference type="GO" id="GO:1903561">
    <property type="term" value="C:extracellular vesicle"/>
    <property type="evidence" value="ECO:0007669"/>
    <property type="project" value="TreeGrafter"/>
</dbReference>
<dbReference type="GO" id="GO:0030446">
    <property type="term" value="C:hyphal cell wall"/>
    <property type="evidence" value="ECO:0007669"/>
    <property type="project" value="TreeGrafter"/>
</dbReference>
<dbReference type="GO" id="GO:0005886">
    <property type="term" value="C:plasma membrane"/>
    <property type="evidence" value="ECO:0007669"/>
    <property type="project" value="UniProtKB-SubCell"/>
</dbReference>
<dbReference type="GO" id="GO:0098552">
    <property type="term" value="C:side of membrane"/>
    <property type="evidence" value="ECO:0007669"/>
    <property type="project" value="UniProtKB-KW"/>
</dbReference>
<dbReference type="GO" id="GO:0030445">
    <property type="term" value="C:yeast-form cell wall"/>
    <property type="evidence" value="ECO:0007669"/>
    <property type="project" value="TreeGrafter"/>
</dbReference>
<dbReference type="GO" id="GO:0043710">
    <property type="term" value="P:cell adhesion involved in multi-species biofilm formation"/>
    <property type="evidence" value="ECO:0007669"/>
    <property type="project" value="TreeGrafter"/>
</dbReference>
<dbReference type="GO" id="GO:0043709">
    <property type="term" value="P:cell adhesion involved in single-species biofilm formation"/>
    <property type="evidence" value="ECO:0007669"/>
    <property type="project" value="TreeGrafter"/>
</dbReference>
<dbReference type="GO" id="GO:0098609">
    <property type="term" value="P:cell-cell adhesion"/>
    <property type="evidence" value="ECO:0007669"/>
    <property type="project" value="TreeGrafter"/>
</dbReference>
<dbReference type="GO" id="GO:0030448">
    <property type="term" value="P:hyphal growth"/>
    <property type="evidence" value="ECO:0007669"/>
    <property type="project" value="TreeGrafter"/>
</dbReference>
<dbReference type="GO" id="GO:0044011">
    <property type="term" value="P:single-species biofilm formation on inanimate substrate"/>
    <property type="evidence" value="ECO:0007669"/>
    <property type="project" value="TreeGrafter"/>
</dbReference>
<dbReference type="FunFam" id="2.60.40.1280:FF:000001">
    <property type="entry name" value="Agglutinin-like protein 3"/>
    <property type="match status" value="1"/>
</dbReference>
<dbReference type="FunFam" id="2.60.40.2430:FF:000001">
    <property type="entry name" value="Agglutinin-like protein 3"/>
    <property type="match status" value="1"/>
</dbReference>
<dbReference type="Gene3D" id="2.60.40.1280">
    <property type="match status" value="1"/>
</dbReference>
<dbReference type="Gene3D" id="2.60.40.2430">
    <property type="entry name" value="Agglutinin-like protein, N-terminal domain, N2 subdomain"/>
    <property type="match status" value="1"/>
</dbReference>
<dbReference type="InterPro" id="IPR008966">
    <property type="entry name" value="Adhesion_dom_sf"/>
</dbReference>
<dbReference type="InterPro" id="IPR008440">
    <property type="entry name" value="Agglutinin-like_ALS_rpt"/>
</dbReference>
<dbReference type="InterPro" id="IPR024672">
    <property type="entry name" value="Agglutinin-like_N"/>
</dbReference>
<dbReference type="InterPro" id="IPR043063">
    <property type="entry name" value="Agglutinin-like_N_N2"/>
</dbReference>
<dbReference type="InterPro" id="IPR033504">
    <property type="entry name" value="ALS"/>
</dbReference>
<dbReference type="InterPro" id="IPR011252">
    <property type="entry name" value="Fibrogen-bd_dom1"/>
</dbReference>
<dbReference type="PANTHER" id="PTHR33793:SF2">
    <property type="entry name" value="AGGLUTININ-LIKE PROTEIN 6"/>
    <property type="match status" value="1"/>
</dbReference>
<dbReference type="PANTHER" id="PTHR33793">
    <property type="entry name" value="ALPHA-AGGLUTININ"/>
    <property type="match status" value="1"/>
</dbReference>
<dbReference type="Pfam" id="PF05792">
    <property type="entry name" value="Candida_ALS"/>
    <property type="match status" value="8"/>
</dbReference>
<dbReference type="Pfam" id="PF11766">
    <property type="entry name" value="Candida_ALS_N"/>
    <property type="match status" value="1"/>
</dbReference>
<dbReference type="SMART" id="SM01056">
    <property type="entry name" value="Candida_ALS_N"/>
    <property type="match status" value="1"/>
</dbReference>
<dbReference type="SUPFAM" id="SSF49401">
    <property type="entry name" value="Bacterial adhesins"/>
    <property type="match status" value="1"/>
</dbReference>
<feature type="signal peptide" evidence="3">
    <location>
        <begin position="1"/>
        <end position="17"/>
    </location>
</feature>
<feature type="chain" id="PRO_0000020661" description="Agglutinin-like protein 5">
    <location>
        <begin position="18"/>
        <end position="1398"/>
    </location>
</feature>
<feature type="propeptide" id="PRO_0000420217" description="Removed in mature form" evidence="3">
    <location>
        <begin position="1399"/>
        <end position="1419"/>
    </location>
</feature>
<feature type="repeat" description="ALS 1">
    <location>
        <begin position="365"/>
        <end position="396"/>
    </location>
</feature>
<feature type="repeat" description="ALS 2">
    <location>
        <begin position="401"/>
        <end position="432"/>
    </location>
</feature>
<feature type="repeat" description="ALS 3">
    <location>
        <begin position="438"/>
        <end position="469"/>
    </location>
</feature>
<feature type="repeat" description="ALS 4">
    <location>
        <begin position="474"/>
        <end position="505"/>
    </location>
</feature>
<feature type="repeat" description="ALS 5">
    <location>
        <begin position="510"/>
        <end position="541"/>
    </location>
</feature>
<feature type="repeat" description="ALS 6">
    <location>
        <begin position="546"/>
        <end position="577"/>
    </location>
</feature>
<feature type="repeat" description="ALS 7">
    <location>
        <begin position="582"/>
        <end position="613"/>
    </location>
</feature>
<feature type="repeat" description="ALS 8">
    <location>
        <begin position="618"/>
        <end position="649"/>
    </location>
</feature>
<feature type="region of interest" description="Disordered" evidence="4">
    <location>
        <begin position="652"/>
        <end position="752"/>
    </location>
</feature>
<feature type="region of interest" description="Disordered" evidence="4">
    <location>
        <begin position="864"/>
        <end position="885"/>
    </location>
</feature>
<feature type="region of interest" description="Disordered" evidence="4">
    <location>
        <begin position="926"/>
        <end position="966"/>
    </location>
</feature>
<feature type="region of interest" description="Disordered" evidence="4">
    <location>
        <begin position="981"/>
        <end position="1035"/>
    </location>
</feature>
<feature type="region of interest" description="Disordered" evidence="4">
    <location>
        <begin position="1051"/>
        <end position="1093"/>
    </location>
</feature>
<feature type="region of interest" description="Disordered" evidence="4">
    <location>
        <begin position="1134"/>
        <end position="1177"/>
    </location>
</feature>
<feature type="region of interest" description="Disordered" evidence="4">
    <location>
        <begin position="1211"/>
        <end position="1252"/>
    </location>
</feature>
<feature type="compositionally biased region" description="Low complexity" evidence="4">
    <location>
        <begin position="928"/>
        <end position="942"/>
    </location>
</feature>
<feature type="compositionally biased region" description="Low complexity" evidence="4">
    <location>
        <begin position="951"/>
        <end position="966"/>
    </location>
</feature>
<feature type="compositionally biased region" description="Low complexity" evidence="4">
    <location>
        <begin position="993"/>
        <end position="1011"/>
    </location>
</feature>
<feature type="compositionally biased region" description="Polar residues" evidence="4">
    <location>
        <begin position="1012"/>
        <end position="1022"/>
    </location>
</feature>
<feature type="compositionally biased region" description="Low complexity" evidence="4">
    <location>
        <begin position="1023"/>
        <end position="1035"/>
    </location>
</feature>
<feature type="compositionally biased region" description="Low complexity" evidence="4">
    <location>
        <begin position="1051"/>
        <end position="1078"/>
    </location>
</feature>
<feature type="compositionally biased region" description="Polar residues" evidence="4">
    <location>
        <begin position="1079"/>
        <end position="1093"/>
    </location>
</feature>
<feature type="compositionally biased region" description="Polar residues" evidence="4">
    <location>
        <begin position="1138"/>
        <end position="1160"/>
    </location>
</feature>
<feature type="compositionally biased region" description="Low complexity" evidence="4">
    <location>
        <begin position="1212"/>
        <end position="1230"/>
    </location>
</feature>
<feature type="lipid moiety-binding region" description="GPI-anchor amidated serine" evidence="3">
    <location>
        <position position="1398"/>
    </location>
</feature>
<feature type="glycosylation site" description="N-linked (GlcNAc...) asparagine" evidence="3">
    <location>
        <position position="665"/>
    </location>
</feature>
<feature type="glycosylation site" description="N-linked (GlcNAc...) asparagine" evidence="3">
    <location>
        <position position="919"/>
    </location>
</feature>
<feature type="glycosylation site" description="N-linked (GlcNAc...) asparagine" evidence="3">
    <location>
        <position position="1301"/>
    </location>
</feature>
<feature type="glycosylation site" description="N-linked (GlcNAc...) asparagine" evidence="3">
    <location>
        <position position="1326"/>
    </location>
</feature>
<feature type="disulfide bond" evidence="1">
    <location>
        <begin position="73"/>
        <end position="150"/>
    </location>
</feature>
<feature type="disulfide bond" evidence="1">
    <location>
        <begin position="96"/>
        <end position="112"/>
    </location>
</feature>
<feature type="disulfide bond" evidence="1">
    <location>
        <begin position="205"/>
        <end position="298"/>
    </location>
</feature>
<feature type="disulfide bond" evidence="1">
    <location>
        <begin position="227"/>
        <end position="256"/>
    </location>
</feature>
<accession>O13368</accession>
<keyword id="KW-0002">3D-structure</keyword>
<keyword id="KW-0130">Cell adhesion</keyword>
<keyword id="KW-1003">Cell membrane</keyword>
<keyword id="KW-0134">Cell wall</keyword>
<keyword id="KW-1015">Disulfide bond</keyword>
<keyword id="KW-0325">Glycoprotein</keyword>
<keyword id="KW-0336">GPI-anchor</keyword>
<keyword id="KW-0449">Lipoprotein</keyword>
<keyword id="KW-0472">Membrane</keyword>
<keyword id="KW-0677">Repeat</keyword>
<keyword id="KW-0964">Secreted</keyword>
<keyword id="KW-0732">Signal</keyword>
<keyword id="KW-0843">Virulence</keyword>
<comment type="function">
    <text evidence="2 5">Cell surface adhesion protein which mediates both yeast-to-host tissue adherence and yeast aggregation (PubMed:9393828). Plays an important role in the pathogenesis of C.albicans infections. Forms amyloid structures, essential for cell-cell association and cell-substrate adhesion to polystyrene (By similarity).</text>
</comment>
<comment type="subunit">
    <text evidence="2">Forms homodimers through the tandem repeats. Aggregates in amyloid-like structures, with self-propagating secondary-structure changes, amyloid-characteristic dye binding, and induced birefringence.</text>
</comment>
<comment type="subcellular location">
    <subcellularLocation>
        <location evidence="2">Cell membrane</location>
        <topology evidence="2">Lipid-anchor</topology>
        <topology evidence="2">GPI-anchor</topology>
    </subcellularLocation>
    <subcellularLocation>
        <location evidence="2">Secreted</location>
        <location evidence="2">Cell wall</location>
    </subcellularLocation>
    <text evidence="2">Identified as covalently-linked GPI-modified cell wall protein (GPI-CWP) in the outer cell wall layer.</text>
</comment>
<comment type="domain">
    <text evidence="2">Each ALS protein has a similar three-domain structure, including a N-ter domain of 433-436 amino acids that is 55-90 percent identical across the family and which mediates adherence to various materials; a central domain of variable numbers of tandemly repeated copies of a 36 amino acid motif; and a C-ter domain that is relatively variable in length and sequence across the family.</text>
</comment>
<comment type="PTM">
    <text evidence="6">N-glycosylated and O-glycosylated.</text>
</comment>
<comment type="PTM">
    <text evidence="2">The GPI-anchor is attached to the protein in the endoplasmic reticulum and serves to target the protein to the cell surface. There, the glucosamine-inositol phospholipid moiety is cleaved off and the GPI-modified mannoprotein is covalently attached via its lipidless GPI glycan remnant to the 1,6-beta-glucan of the outer cell wall layer.</text>
</comment>
<comment type="similarity">
    <text evidence="6">Belongs to the ALS family.</text>
</comment>
<evidence type="ECO:0000250" key="1">
    <source>
        <dbReference type="UniProtKB" id="A0A1D8PQ86"/>
    </source>
</evidence>
<evidence type="ECO:0000250" key="2">
    <source>
        <dbReference type="UniProtKB" id="Q5A8T7"/>
    </source>
</evidence>
<evidence type="ECO:0000255" key="3"/>
<evidence type="ECO:0000256" key="4">
    <source>
        <dbReference type="SAM" id="MobiDB-lite"/>
    </source>
</evidence>
<evidence type="ECO:0000269" key="5">
    <source>
    </source>
</evidence>
<evidence type="ECO:0000305" key="6"/>
<name>ALS5_CANAX</name>
<organism>
    <name type="scientific">Candida albicans</name>
    <name type="common">Yeast</name>
    <dbReference type="NCBI Taxonomy" id="5476"/>
    <lineage>
        <taxon>Eukaryota</taxon>
        <taxon>Fungi</taxon>
        <taxon>Dikarya</taxon>
        <taxon>Ascomycota</taxon>
        <taxon>Saccharomycotina</taxon>
        <taxon>Pichiomycetes</taxon>
        <taxon>Debaryomycetaceae</taxon>
        <taxon>Candida/Lodderomyces clade</taxon>
        <taxon>Candida</taxon>
    </lineage>
</organism>
<gene>
    <name type="primary">ALS5</name>
    <name type="synonym">ALA1</name>
</gene>
<sequence>MIQQFTLLFLYLSFATAKAITGIFNSIDSLTWSNAGNYAFKGPGYPTWNAVLGWSLDGTSANPGDTFILNMPCVFKFTASQKSVDLTADGVKYATCQFYSGEEFTTFSSLKCTVNNNLRSSIKALGTVTLPIAFNVGGTGSSVDLEDSKCFTAGTNTVTFNDGSKKLSIAVNFEKSTVDQSGYLTTSRFMPSLNKIATLYVAPQCENGYTSGTMGFSTSYGDVAIDCSNVHIGISKGVNDWNHPVTSESFSYTKSCSSFGISITYQNVPAGYRPFIDAYISPSDNNQYQLSYKNDYTCVDDYWQHAPFTLKWTGYKNSDAGSNGIVIVATTRTVTDSTTAVTTLPFNPSVDKTKTIEILQPIPTTTITTSYVGVTTSYSTKTAPIGETATVIVDVPYHTTTTVTSEWTGTITTTTTRTNPTDSIDTVVVQVPSPNPTTTTTQFWSESFTSTTTITNSLKGTDSVIVREPHNPTVTTTEFWSESFATTETITSKPEGTDSVIVREPHNPTVTTTEFWSESYATTETITNGPEGTDSVIVREPHNPTVTTTKFWSESYATTETITNKPEGTDSVIVKEPYNPTVTTTEFWSESYATTETITNGPEGTDSVIVREPHNPTVTTTEFWSESYATTETITTGPLGTDSIVIHDPLEESSSTTAIESSDSNISSSAQESSSSVEQSSSIVGLSSSSDIPLSSDMPSSSSTGLTSSESSTVSSYDSDSSSSIESSTLSSSDRCSSSISDTTSFWDSSSSDLESTSITWSSSIDAQSSHLVQSVSNSISTSQELSSSSSEESSTFATDALVSSDASSILSSDTSSYYPSSTISSSDDFPHTIAGESDSLSISFITSTVEISSDSVSLTSDPASSFDSSSSLNSDSSSSPSSDQSDILTSSSFSTLVVPSFSLSSSSSLSLTYPHYVNSTTYHASESESSSVASPSMASESANDDTYTLSESTDTTSSIGTDSSTVTFCRRDNGDGCIVTGMPSSSIDSEQTSDVTTTSSFVASSTPTSAEQSITDNPNIDSSQTSASSSTKSSVSVSDTVVNSILLSETSTLSSDDSTSSDTSISSTTNSDTGNINAGSSHTSTASIKESSIQKTGVTLSSSYLSTKLSSTSDITIELITTELITTELTTIEDNEPNTFTSTPSSHSEIFSSDNSVLSKQVDRESTIKTSPTTDVTTVSSLSVHSTEASTATLGENSFSNVASTPSNIATSLRSTSSSSNHATESSGTVKSEASAEAIPSPPTSTDNRLSYSTEEAKGITYANSGSTNNLITESQVAAPTDSTSVLIENPVVTSTFDDNSSAAVDQPSKTKSIEESIMNPDSTNETNNGFIATLSQAQVPSSSIHSELISTTTAKTTDASMNGDSAASNSQPTTLIQQVATSSYNQPLITTYAGSSSATKHPSWLLKFISVALFFFL</sequence>
<proteinExistence type="evidence at protein level"/>
<protein>
    <recommendedName>
        <fullName>Agglutinin-like protein 5</fullName>
    </recommendedName>
    <alternativeName>
        <fullName>Adhesin 5</fullName>
    </alternativeName>
</protein>